<keyword id="KW-0067">ATP-binding</keyword>
<keyword id="KW-0963">Cytoplasm</keyword>
<keyword id="KW-0418">Kinase</keyword>
<keyword id="KW-0460">Magnesium</keyword>
<keyword id="KW-0479">Metal-binding</keyword>
<keyword id="KW-0546">Nucleotide metabolism</keyword>
<keyword id="KW-0547">Nucleotide-binding</keyword>
<keyword id="KW-0597">Phosphoprotein</keyword>
<keyword id="KW-1185">Reference proteome</keyword>
<keyword id="KW-0808">Transferase</keyword>
<feature type="chain" id="PRO_1000125007" description="Nucleoside diphosphate kinase">
    <location>
        <begin position="1"/>
        <end position="140"/>
    </location>
</feature>
<feature type="active site" description="Pros-phosphohistidine intermediate" evidence="1">
    <location>
        <position position="117"/>
    </location>
</feature>
<feature type="binding site" evidence="1">
    <location>
        <position position="11"/>
    </location>
    <ligand>
        <name>ATP</name>
        <dbReference type="ChEBI" id="CHEBI:30616"/>
    </ligand>
</feature>
<feature type="binding site" evidence="1">
    <location>
        <position position="59"/>
    </location>
    <ligand>
        <name>ATP</name>
        <dbReference type="ChEBI" id="CHEBI:30616"/>
    </ligand>
</feature>
<feature type="binding site" evidence="1">
    <location>
        <position position="87"/>
    </location>
    <ligand>
        <name>ATP</name>
        <dbReference type="ChEBI" id="CHEBI:30616"/>
    </ligand>
</feature>
<feature type="binding site" evidence="1">
    <location>
        <position position="93"/>
    </location>
    <ligand>
        <name>ATP</name>
        <dbReference type="ChEBI" id="CHEBI:30616"/>
    </ligand>
</feature>
<feature type="binding site" evidence="1">
    <location>
        <position position="104"/>
    </location>
    <ligand>
        <name>ATP</name>
        <dbReference type="ChEBI" id="CHEBI:30616"/>
    </ligand>
</feature>
<feature type="binding site" evidence="1">
    <location>
        <position position="114"/>
    </location>
    <ligand>
        <name>ATP</name>
        <dbReference type="ChEBI" id="CHEBI:30616"/>
    </ligand>
</feature>
<comment type="function">
    <text evidence="1">Major role in the synthesis of nucleoside triphosphates other than ATP. The ATP gamma phosphate is transferred to the NDP beta phosphate via a ping-pong mechanism, using a phosphorylated active-site intermediate.</text>
</comment>
<comment type="catalytic activity">
    <reaction evidence="1">
        <text>a 2'-deoxyribonucleoside 5'-diphosphate + ATP = a 2'-deoxyribonucleoside 5'-triphosphate + ADP</text>
        <dbReference type="Rhea" id="RHEA:44640"/>
        <dbReference type="ChEBI" id="CHEBI:30616"/>
        <dbReference type="ChEBI" id="CHEBI:61560"/>
        <dbReference type="ChEBI" id="CHEBI:73316"/>
        <dbReference type="ChEBI" id="CHEBI:456216"/>
        <dbReference type="EC" id="2.7.4.6"/>
    </reaction>
</comment>
<comment type="catalytic activity">
    <reaction evidence="1">
        <text>a ribonucleoside 5'-diphosphate + ATP = a ribonucleoside 5'-triphosphate + ADP</text>
        <dbReference type="Rhea" id="RHEA:18113"/>
        <dbReference type="ChEBI" id="CHEBI:30616"/>
        <dbReference type="ChEBI" id="CHEBI:57930"/>
        <dbReference type="ChEBI" id="CHEBI:61557"/>
        <dbReference type="ChEBI" id="CHEBI:456216"/>
        <dbReference type="EC" id="2.7.4.6"/>
    </reaction>
</comment>
<comment type="cofactor">
    <cofactor evidence="1">
        <name>Mg(2+)</name>
        <dbReference type="ChEBI" id="CHEBI:18420"/>
    </cofactor>
</comment>
<comment type="subunit">
    <text evidence="1">Homotetramer.</text>
</comment>
<comment type="subcellular location">
    <subcellularLocation>
        <location evidence="1">Cytoplasm</location>
    </subcellularLocation>
</comment>
<comment type="similarity">
    <text evidence="1">Belongs to the NDK family.</text>
</comment>
<proteinExistence type="inferred from homology"/>
<dbReference type="EC" id="2.7.4.6" evidence="1"/>
<dbReference type="EMBL" id="CP000613">
    <property type="protein sequence ID" value="ACI98957.1"/>
    <property type="molecule type" value="Genomic_DNA"/>
</dbReference>
<dbReference type="RefSeq" id="WP_012566743.1">
    <property type="nucleotide sequence ID" value="NC_011420.2"/>
</dbReference>
<dbReference type="SMR" id="B6IN60"/>
<dbReference type="STRING" id="414684.RC1_1554"/>
<dbReference type="KEGG" id="rce:RC1_1554"/>
<dbReference type="eggNOG" id="COG0105">
    <property type="taxonomic scope" value="Bacteria"/>
</dbReference>
<dbReference type="HOGENOM" id="CLU_060216_8_1_5"/>
<dbReference type="OrthoDB" id="9801161at2"/>
<dbReference type="Proteomes" id="UP000001591">
    <property type="component" value="Chromosome"/>
</dbReference>
<dbReference type="GO" id="GO:0005737">
    <property type="term" value="C:cytoplasm"/>
    <property type="evidence" value="ECO:0007669"/>
    <property type="project" value="UniProtKB-SubCell"/>
</dbReference>
<dbReference type="GO" id="GO:0005524">
    <property type="term" value="F:ATP binding"/>
    <property type="evidence" value="ECO:0007669"/>
    <property type="project" value="UniProtKB-UniRule"/>
</dbReference>
<dbReference type="GO" id="GO:0046872">
    <property type="term" value="F:metal ion binding"/>
    <property type="evidence" value="ECO:0007669"/>
    <property type="project" value="UniProtKB-KW"/>
</dbReference>
<dbReference type="GO" id="GO:0004550">
    <property type="term" value="F:nucleoside diphosphate kinase activity"/>
    <property type="evidence" value="ECO:0007669"/>
    <property type="project" value="UniProtKB-UniRule"/>
</dbReference>
<dbReference type="GO" id="GO:0006241">
    <property type="term" value="P:CTP biosynthetic process"/>
    <property type="evidence" value="ECO:0007669"/>
    <property type="project" value="UniProtKB-UniRule"/>
</dbReference>
<dbReference type="GO" id="GO:0006183">
    <property type="term" value="P:GTP biosynthetic process"/>
    <property type="evidence" value="ECO:0007669"/>
    <property type="project" value="UniProtKB-UniRule"/>
</dbReference>
<dbReference type="GO" id="GO:0006228">
    <property type="term" value="P:UTP biosynthetic process"/>
    <property type="evidence" value="ECO:0007669"/>
    <property type="project" value="UniProtKB-UniRule"/>
</dbReference>
<dbReference type="CDD" id="cd04413">
    <property type="entry name" value="NDPk_I"/>
    <property type="match status" value="1"/>
</dbReference>
<dbReference type="FunFam" id="3.30.70.141:FF:000001">
    <property type="entry name" value="Nucleoside diphosphate kinase"/>
    <property type="match status" value="1"/>
</dbReference>
<dbReference type="Gene3D" id="3.30.70.141">
    <property type="entry name" value="Nucleoside diphosphate kinase-like domain"/>
    <property type="match status" value="1"/>
</dbReference>
<dbReference type="HAMAP" id="MF_00451">
    <property type="entry name" value="NDP_kinase"/>
    <property type="match status" value="1"/>
</dbReference>
<dbReference type="InterPro" id="IPR034907">
    <property type="entry name" value="NDK-like_dom"/>
</dbReference>
<dbReference type="InterPro" id="IPR036850">
    <property type="entry name" value="NDK-like_dom_sf"/>
</dbReference>
<dbReference type="InterPro" id="IPR001564">
    <property type="entry name" value="Nucleoside_diP_kinase"/>
</dbReference>
<dbReference type="InterPro" id="IPR023005">
    <property type="entry name" value="Nucleoside_diP_kinase_AS"/>
</dbReference>
<dbReference type="NCBIfam" id="NF001908">
    <property type="entry name" value="PRK00668.1"/>
    <property type="match status" value="1"/>
</dbReference>
<dbReference type="PANTHER" id="PTHR11349">
    <property type="entry name" value="NUCLEOSIDE DIPHOSPHATE KINASE"/>
    <property type="match status" value="1"/>
</dbReference>
<dbReference type="Pfam" id="PF00334">
    <property type="entry name" value="NDK"/>
    <property type="match status" value="1"/>
</dbReference>
<dbReference type="PRINTS" id="PR01243">
    <property type="entry name" value="NUCDPKINASE"/>
</dbReference>
<dbReference type="SMART" id="SM00562">
    <property type="entry name" value="NDK"/>
    <property type="match status" value="1"/>
</dbReference>
<dbReference type="SUPFAM" id="SSF54919">
    <property type="entry name" value="Nucleoside diphosphate kinase, NDK"/>
    <property type="match status" value="1"/>
</dbReference>
<dbReference type="PROSITE" id="PS00469">
    <property type="entry name" value="NDPK"/>
    <property type="match status" value="1"/>
</dbReference>
<dbReference type="PROSITE" id="PS51374">
    <property type="entry name" value="NDPK_LIKE"/>
    <property type="match status" value="1"/>
</dbReference>
<name>NDK_RHOCS</name>
<protein>
    <recommendedName>
        <fullName evidence="1">Nucleoside diphosphate kinase</fullName>
        <shortName evidence="1">NDK</shortName>
        <shortName evidence="1">NDP kinase</shortName>
        <ecNumber evidence="1">2.7.4.6</ecNumber>
    </recommendedName>
    <alternativeName>
        <fullName evidence="1">Nucleoside-2-P kinase</fullName>
    </alternativeName>
</protein>
<evidence type="ECO:0000255" key="1">
    <source>
        <dbReference type="HAMAP-Rule" id="MF_00451"/>
    </source>
</evidence>
<reference key="1">
    <citation type="submission" date="2007-03" db="EMBL/GenBank/DDBJ databases">
        <title>Genome sequence of Rhodospirillum centenum.</title>
        <authorList>
            <person name="Touchman J.W."/>
            <person name="Bauer C."/>
            <person name="Blankenship R.E."/>
        </authorList>
    </citation>
    <scope>NUCLEOTIDE SEQUENCE [LARGE SCALE GENOMIC DNA]</scope>
    <source>
        <strain>ATCC 51521 / SW</strain>
    </source>
</reference>
<gene>
    <name evidence="1" type="primary">ndk</name>
    <name type="ordered locus">RC1_1554</name>
</gene>
<organism>
    <name type="scientific">Rhodospirillum centenum (strain ATCC 51521 / SW)</name>
    <dbReference type="NCBI Taxonomy" id="414684"/>
    <lineage>
        <taxon>Bacteria</taxon>
        <taxon>Pseudomonadati</taxon>
        <taxon>Pseudomonadota</taxon>
        <taxon>Alphaproteobacteria</taxon>
        <taxon>Rhodospirillales</taxon>
        <taxon>Rhodospirillaceae</taxon>
        <taxon>Rhodospirillum</taxon>
    </lineage>
</organism>
<accession>B6IN60</accession>
<sequence>MAVERTLSIVKPDATRRNLTGKINARFEEAGLRIVAQKRIRLTREQAEQFYIVHAERPFYGELVSFMISGPVVVQVLEGENAVARNREIMGATNPANAAPGTIRKDFAESIEANSVHGSDSLENAATEIAYFFSGTEIVG</sequence>